<accession>P46103</accession>
<feature type="chain" id="PRO_0000186350" description="Bifunctional dihydrofolate reductase-thymidylate synthase">
    <location>
        <begin position="1" status="less than"/>
        <end position="182" status="greater than"/>
    </location>
</feature>
<feature type="domain" description="DHFR" evidence="2">
    <location>
        <begin position="1" status="less than"/>
        <end position="182" status="greater than"/>
    </location>
</feature>
<feature type="binding site" evidence="1">
    <location>
        <begin position="25"/>
        <end position="31"/>
    </location>
    <ligand>
        <name>NADP(+)</name>
        <dbReference type="ChEBI" id="CHEBI:58349"/>
    </ligand>
</feature>
<feature type="binding site" evidence="1">
    <location>
        <position position="40"/>
    </location>
    <ligand>
        <name>substrate</name>
    </ligand>
</feature>
<feature type="binding site" evidence="1">
    <location>
        <begin position="93"/>
        <end position="95"/>
    </location>
    <ligand>
        <name>NADP(+)</name>
        <dbReference type="ChEBI" id="CHEBI:58349"/>
    </ligand>
</feature>
<feature type="binding site" evidence="1">
    <location>
        <begin position="114"/>
        <end position="117"/>
    </location>
    <ligand>
        <name>NADP(+)</name>
        <dbReference type="ChEBI" id="CHEBI:58349"/>
    </ligand>
</feature>
<feature type="binding site" evidence="1">
    <location>
        <position position="154"/>
    </location>
    <ligand>
        <name>substrate</name>
    </ligand>
</feature>
<feature type="binding site" evidence="1">
    <location>
        <begin position="155"/>
        <end position="162"/>
    </location>
    <ligand>
        <name>NADP(+)</name>
        <dbReference type="ChEBI" id="CHEBI:58349"/>
    </ligand>
</feature>
<feature type="binding site" evidence="1">
    <location>
        <position position="160"/>
    </location>
    <ligand>
        <name>substrate</name>
    </ligand>
</feature>
<feature type="binding site" evidence="1">
    <location>
        <position position="175"/>
    </location>
    <ligand>
        <name>substrate</name>
    </ligand>
</feature>
<feature type="non-terminal residue">
    <location>
        <position position="1"/>
    </location>
</feature>
<feature type="non-terminal residue">
    <location>
        <position position="182"/>
    </location>
</feature>
<name>DRTS_PLAVN</name>
<proteinExistence type="inferred from homology"/>
<sequence>AICACCKVLNSNEKASCFSNKTFKGLGNAGGLPWKCNSVDMKHFVSVTSYVNENNYIRLKWKRDKYIKENNVKVNTDGIPSIDKLQNIVVMGKTSWESIPSKFKPLENRINIILSRTLKKENLAKEYSNVIIIKSVDELFPILKCIKYYKCFIIGGASVYKEFLDRNLIKKIYFTRINNAYT</sequence>
<keyword id="KW-0489">Methyltransferase</keyword>
<keyword id="KW-0511">Multifunctional enzyme</keyword>
<keyword id="KW-0521">NADP</keyword>
<keyword id="KW-0545">Nucleotide biosynthesis</keyword>
<keyword id="KW-0554">One-carbon metabolism</keyword>
<keyword id="KW-0560">Oxidoreductase</keyword>
<keyword id="KW-0808">Transferase</keyword>
<organism>
    <name type="scientific">Plasmodium vinckei</name>
    <dbReference type="NCBI Taxonomy" id="5860"/>
    <lineage>
        <taxon>Eukaryota</taxon>
        <taxon>Sar</taxon>
        <taxon>Alveolata</taxon>
        <taxon>Apicomplexa</taxon>
        <taxon>Aconoidasida</taxon>
        <taxon>Haemosporida</taxon>
        <taxon>Plasmodiidae</taxon>
        <taxon>Plasmodium</taxon>
        <taxon>Plasmodium (Vinckeia)</taxon>
    </lineage>
</organism>
<comment type="function">
    <text evidence="1">Bifunctional enzyme. Involved in de novo dTMP biosynthesis. Key enzyme in folate metabolism. Catalyzes an essential reaction for de novo glycine and purine synthesis, DNA precursor synthesis, and for the conversion of dUMP to dTMP (By similarity).</text>
</comment>
<comment type="catalytic activity">
    <reaction evidence="2">
        <text>(6S)-5,6,7,8-tetrahydrofolate + NADP(+) = 7,8-dihydrofolate + NADPH + H(+)</text>
        <dbReference type="Rhea" id="RHEA:15009"/>
        <dbReference type="ChEBI" id="CHEBI:15378"/>
        <dbReference type="ChEBI" id="CHEBI:57451"/>
        <dbReference type="ChEBI" id="CHEBI:57453"/>
        <dbReference type="ChEBI" id="CHEBI:57783"/>
        <dbReference type="ChEBI" id="CHEBI:58349"/>
        <dbReference type="EC" id="1.5.1.3"/>
    </reaction>
</comment>
<comment type="catalytic activity">
    <reaction>
        <text>dUMP + (6R)-5,10-methylene-5,6,7,8-tetrahydrofolate = 7,8-dihydrofolate + dTMP</text>
        <dbReference type="Rhea" id="RHEA:12104"/>
        <dbReference type="ChEBI" id="CHEBI:15636"/>
        <dbReference type="ChEBI" id="CHEBI:57451"/>
        <dbReference type="ChEBI" id="CHEBI:63528"/>
        <dbReference type="ChEBI" id="CHEBI:246422"/>
        <dbReference type="EC" id="2.1.1.45"/>
    </reaction>
</comment>
<comment type="pathway">
    <text>Cofactor biosynthesis; tetrahydrofolate biosynthesis; 5,6,7,8-tetrahydrofolate from 7,8-dihydrofolate: step 1/1.</text>
</comment>
<comment type="subunit">
    <text evidence="1">Homodimer.</text>
</comment>
<comment type="similarity">
    <text evidence="3">In the N-terminal section; belongs to the dihydrofolate reductase family.</text>
</comment>
<comment type="similarity">
    <text evidence="3">In the C-terminal section; belongs to the thymidylate synthase family.</text>
</comment>
<protein>
    <recommendedName>
        <fullName>Bifunctional dihydrofolate reductase-thymidylate synthase</fullName>
        <shortName>DHFR-TS</shortName>
    </recommendedName>
    <domain>
        <recommendedName>
            <fullName>Dihydrofolate reductase</fullName>
            <ecNumber>1.5.1.3</ecNumber>
        </recommendedName>
    </domain>
    <domain>
        <recommendedName>
            <fullName>Thymidylate synthase</fullName>
            <ecNumber>2.1.1.45</ecNumber>
        </recommendedName>
    </domain>
</protein>
<reference key="1">
    <citation type="journal article" date="1994" name="Mol. Biochem. Parasitol.">
        <title>The dihydrofolate reductase domain of rodent malarias: point mutations and pyrimethamine resistance.</title>
        <authorList>
            <person name="Cheng Q."/>
            <person name="Saul A."/>
        </authorList>
    </citation>
    <scope>NUCLEOTIDE SEQUENCE [GENOMIC DNA]</scope>
</reference>
<evidence type="ECO:0000250" key="1"/>
<evidence type="ECO:0000255" key="2">
    <source>
        <dbReference type="PROSITE-ProRule" id="PRU00660"/>
    </source>
</evidence>
<evidence type="ECO:0000305" key="3"/>
<dbReference type="EC" id="1.5.1.3"/>
<dbReference type="EC" id="2.1.1.45"/>
<dbReference type="EMBL" id="L28121">
    <property type="protein sequence ID" value="AAA29582.1"/>
    <property type="molecule type" value="Genomic_DNA"/>
</dbReference>
<dbReference type="SMR" id="P46103"/>
<dbReference type="VEuPathDB" id="PlasmoDB:PVBDA_0701980"/>
<dbReference type="VEuPathDB" id="PlasmoDB:PVLDE_0703080"/>
<dbReference type="VEuPathDB" id="PlasmoDB:PVPCR_0702010"/>
<dbReference type="VEuPathDB" id="PlasmoDB:PVSEL_0702080"/>
<dbReference type="VEuPathDB" id="PlasmoDB:PVVCY_0701900"/>
<dbReference type="VEuPathDB" id="PlasmoDB:YYE_04219"/>
<dbReference type="VEuPathDB" id="PlasmoDB:YYG_04095"/>
<dbReference type="UniPathway" id="UPA00077">
    <property type="reaction ID" value="UER00158"/>
</dbReference>
<dbReference type="GO" id="GO:0005739">
    <property type="term" value="C:mitochondrion"/>
    <property type="evidence" value="ECO:0007669"/>
    <property type="project" value="TreeGrafter"/>
</dbReference>
<dbReference type="GO" id="GO:0004146">
    <property type="term" value="F:dihydrofolate reductase activity"/>
    <property type="evidence" value="ECO:0007669"/>
    <property type="project" value="UniProtKB-EC"/>
</dbReference>
<dbReference type="GO" id="GO:0050661">
    <property type="term" value="F:NADP binding"/>
    <property type="evidence" value="ECO:0007669"/>
    <property type="project" value="InterPro"/>
</dbReference>
<dbReference type="GO" id="GO:0004799">
    <property type="term" value="F:thymidylate synthase activity"/>
    <property type="evidence" value="ECO:0007669"/>
    <property type="project" value="UniProtKB-EC"/>
</dbReference>
<dbReference type="GO" id="GO:0046452">
    <property type="term" value="P:dihydrofolate metabolic process"/>
    <property type="evidence" value="ECO:0007669"/>
    <property type="project" value="TreeGrafter"/>
</dbReference>
<dbReference type="GO" id="GO:0046655">
    <property type="term" value="P:folic acid metabolic process"/>
    <property type="evidence" value="ECO:0007669"/>
    <property type="project" value="TreeGrafter"/>
</dbReference>
<dbReference type="GO" id="GO:0032259">
    <property type="term" value="P:methylation"/>
    <property type="evidence" value="ECO:0007669"/>
    <property type="project" value="UniProtKB-KW"/>
</dbReference>
<dbReference type="GO" id="GO:0009165">
    <property type="term" value="P:nucleotide biosynthetic process"/>
    <property type="evidence" value="ECO:0007669"/>
    <property type="project" value="UniProtKB-KW"/>
</dbReference>
<dbReference type="GO" id="GO:0006730">
    <property type="term" value="P:one-carbon metabolic process"/>
    <property type="evidence" value="ECO:0007669"/>
    <property type="project" value="UniProtKB-KW"/>
</dbReference>
<dbReference type="GO" id="GO:0046654">
    <property type="term" value="P:tetrahydrofolate biosynthetic process"/>
    <property type="evidence" value="ECO:0007669"/>
    <property type="project" value="UniProtKB-UniPathway"/>
</dbReference>
<dbReference type="CDD" id="cd00209">
    <property type="entry name" value="DHFR"/>
    <property type="match status" value="1"/>
</dbReference>
<dbReference type="FunFam" id="3.40.430.10:FF:000007">
    <property type="entry name" value="Bifunctional dihydrofolate reductase-thymidylate synthase"/>
    <property type="match status" value="1"/>
</dbReference>
<dbReference type="Gene3D" id="3.40.430.10">
    <property type="entry name" value="Dihydrofolate Reductase, subunit A"/>
    <property type="match status" value="1"/>
</dbReference>
<dbReference type="InterPro" id="IPR012259">
    <property type="entry name" value="DHFR"/>
</dbReference>
<dbReference type="InterPro" id="IPR024072">
    <property type="entry name" value="DHFR-like_dom_sf"/>
</dbReference>
<dbReference type="InterPro" id="IPR017925">
    <property type="entry name" value="DHFR_CS"/>
</dbReference>
<dbReference type="InterPro" id="IPR001796">
    <property type="entry name" value="DHFR_dom"/>
</dbReference>
<dbReference type="PANTHER" id="PTHR48069">
    <property type="entry name" value="DIHYDROFOLATE REDUCTASE"/>
    <property type="match status" value="1"/>
</dbReference>
<dbReference type="PANTHER" id="PTHR48069:SF3">
    <property type="entry name" value="DIHYDROFOLATE REDUCTASE"/>
    <property type="match status" value="1"/>
</dbReference>
<dbReference type="Pfam" id="PF00186">
    <property type="entry name" value="DHFR_1"/>
    <property type="match status" value="1"/>
</dbReference>
<dbReference type="PRINTS" id="PR00070">
    <property type="entry name" value="DHFR"/>
</dbReference>
<dbReference type="SUPFAM" id="SSF53597">
    <property type="entry name" value="Dihydrofolate reductase-like"/>
    <property type="match status" value="1"/>
</dbReference>
<dbReference type="PROSITE" id="PS00075">
    <property type="entry name" value="DHFR_1"/>
    <property type="match status" value="1"/>
</dbReference>
<dbReference type="PROSITE" id="PS51330">
    <property type="entry name" value="DHFR_2"/>
    <property type="match status" value="1"/>
</dbReference>